<name>YRRT_HALH3</name>
<organism>
    <name type="scientific">Halobacillus halophilus (strain ATCC 35676 / DSM 2266 / JCM 20832 / KCTC 3685 / LMG 17431 / NBRC 102448 / NCIMB 2269)</name>
    <name type="common">Sporosarcina halophila</name>
    <dbReference type="NCBI Taxonomy" id="866895"/>
    <lineage>
        <taxon>Bacteria</taxon>
        <taxon>Bacillati</taxon>
        <taxon>Bacillota</taxon>
        <taxon>Bacilli</taxon>
        <taxon>Bacillales</taxon>
        <taxon>Bacillaceae</taxon>
        <taxon>Halobacillus</taxon>
    </lineage>
</organism>
<comment type="function">
    <text evidence="1">Could be a S-adenosyl-L-methionine-dependent methyltransferase.</text>
</comment>
<comment type="similarity">
    <text evidence="1">Belongs to the methyltransferase superfamily. YrrT family.</text>
</comment>
<evidence type="ECO:0000255" key="1">
    <source>
        <dbReference type="HAMAP-Rule" id="MF_02100"/>
    </source>
</evidence>
<keyword id="KW-0489">Methyltransferase</keyword>
<keyword id="KW-1185">Reference proteome</keyword>
<keyword id="KW-0949">S-adenosyl-L-methionine</keyword>
<keyword id="KW-0808">Transferase</keyword>
<dbReference type="EC" id="2.1.1.-" evidence="1"/>
<dbReference type="EMBL" id="EF088801">
    <property type="protein sequence ID" value="ABL09513.1"/>
    <property type="molecule type" value="Genomic_DNA"/>
</dbReference>
<dbReference type="EMBL" id="HE717023">
    <property type="protein sequence ID" value="CCG44381.1"/>
    <property type="molecule type" value="Genomic_DNA"/>
</dbReference>
<dbReference type="RefSeq" id="WP_014642284.1">
    <property type="nucleotide sequence ID" value="NC_017668.1"/>
</dbReference>
<dbReference type="SMR" id="A1DZZ3"/>
<dbReference type="STRING" id="866895.HBHAL_2020"/>
<dbReference type="KEGG" id="hhd:HBHAL_2020"/>
<dbReference type="PATRIC" id="fig|866895.3.peg.1027"/>
<dbReference type="eggNOG" id="COG2226">
    <property type="taxonomic scope" value="Bacteria"/>
</dbReference>
<dbReference type="HOGENOM" id="CLU_111961_0_0_9"/>
<dbReference type="Proteomes" id="UP000007397">
    <property type="component" value="Chromosome"/>
</dbReference>
<dbReference type="GO" id="GO:0008757">
    <property type="term" value="F:S-adenosylmethionine-dependent methyltransferase activity"/>
    <property type="evidence" value="ECO:0007669"/>
    <property type="project" value="UniProtKB-UniRule"/>
</dbReference>
<dbReference type="GO" id="GO:0032259">
    <property type="term" value="P:methylation"/>
    <property type="evidence" value="ECO:0007669"/>
    <property type="project" value="UniProtKB-KW"/>
</dbReference>
<dbReference type="Gene3D" id="3.40.50.150">
    <property type="entry name" value="Vaccinia Virus protein VP39"/>
    <property type="match status" value="1"/>
</dbReference>
<dbReference type="HAMAP" id="MF_02100">
    <property type="entry name" value="Methyltr_YrrT"/>
    <property type="match status" value="1"/>
</dbReference>
<dbReference type="InterPro" id="IPR041698">
    <property type="entry name" value="Methyltransf_25"/>
</dbReference>
<dbReference type="InterPro" id="IPR029063">
    <property type="entry name" value="SAM-dependent_MTases_sf"/>
</dbReference>
<dbReference type="InterPro" id="IPR023553">
    <property type="entry name" value="Uncharacterised_MeTfrase_YrrT"/>
</dbReference>
<dbReference type="PANTHER" id="PTHR43861">
    <property type="entry name" value="TRANS-ACONITATE 2-METHYLTRANSFERASE-RELATED"/>
    <property type="match status" value="1"/>
</dbReference>
<dbReference type="Pfam" id="PF13649">
    <property type="entry name" value="Methyltransf_25"/>
    <property type="match status" value="1"/>
</dbReference>
<dbReference type="SUPFAM" id="SSF53335">
    <property type="entry name" value="S-adenosyl-L-methionine-dependent methyltransferases"/>
    <property type="match status" value="1"/>
</dbReference>
<reference key="1">
    <citation type="journal article" date="2007" name="Appl. Environ. Microbiol.">
        <title>Autoinducer-2-producing protein LuxS, a novel salt- and chloride-induced protein in the moderately halophilic bacterium Halobacillus halophilus.</title>
        <authorList>
            <person name="Sewald X."/>
            <person name="Saum S.H."/>
            <person name="Palm P."/>
            <person name="Pfeiffer F."/>
            <person name="Oesterhelt D."/>
            <person name="Mueller V."/>
        </authorList>
    </citation>
    <scope>NUCLEOTIDE SEQUENCE [GENOMIC DNA]</scope>
    <source>
        <strain>ATCC 35676 / DSM 2266 / JCM 20832 / KCTC 3685 / LMG 17431 / NBRC 102448 / NCIMB 2269</strain>
    </source>
</reference>
<reference key="2">
    <citation type="journal article" date="2013" name="Environ. Microbiol.">
        <title>Chloride and organic osmolytes: a hybrid strategy to cope with elevated salinities by the moderately halophilic, chloride-dependent bacterium Halobacillus halophilus.</title>
        <authorList>
            <person name="Saum S.H."/>
            <person name="Pfeiffer F."/>
            <person name="Palm P."/>
            <person name="Rampp M."/>
            <person name="Schuster S.C."/>
            <person name="Muller V."/>
            <person name="Oesterhelt D."/>
        </authorList>
    </citation>
    <scope>NUCLEOTIDE SEQUENCE [LARGE SCALE GENOMIC DNA]</scope>
    <source>
        <strain>ATCC 35676 / DSM 2266 / JCM 20832 / KCTC 3685 / LMG 17431 / NBRC 102448 / NCIMB 2269</strain>
    </source>
</reference>
<proteinExistence type="inferred from homology"/>
<feature type="chain" id="PRO_0000373856" description="Uncharacterized methyltransferase YrrT">
    <location>
        <begin position="1"/>
        <end position="213"/>
    </location>
</feature>
<feature type="binding site" evidence="1">
    <location>
        <position position="53"/>
    </location>
    <ligand>
        <name>S-adenosyl-L-methionine</name>
        <dbReference type="ChEBI" id="CHEBI:59789"/>
    </ligand>
</feature>
<feature type="binding site" evidence="1">
    <location>
        <position position="74"/>
    </location>
    <ligand>
        <name>S-adenosyl-L-methionine</name>
        <dbReference type="ChEBI" id="CHEBI:59789"/>
    </ligand>
</feature>
<feature type="binding site" evidence="1">
    <location>
        <position position="96"/>
    </location>
    <ligand>
        <name>S-adenosyl-L-methionine</name>
        <dbReference type="ChEBI" id="CHEBI:59789"/>
    </ligand>
</feature>
<gene>
    <name type="primary">yrrT</name>
    <name type="ordered locus">HBHAL_2020</name>
</gene>
<accession>A1DZZ3</accession>
<accession>I0JJR2</accession>
<sequence length="213" mass="24172">MGVEFVDLFNQWASSYDDTVSGNDPEYKEVFEGYEDMLELLAGLSISPVMEFGVGTANLTRKMIGQNKVVIGIEPSSEMRRIANLKCPEAAIYDGDFLNYPQLITPIQSIVSSFAFHHLTTSEKIEAIQKFDDKLESKGKVIFIDTLFKDEAHKQALIKNAEKSGHLNLAQDLQEEYYGYLDELKEMFSNQGFEVSFKQINNYAWLIQAKKGE</sequence>
<protein>
    <recommendedName>
        <fullName evidence="1">Uncharacterized methyltransferase YrrT</fullName>
        <ecNumber evidence="1">2.1.1.-</ecNumber>
    </recommendedName>
</protein>